<comment type="subcellular location">
    <subcellularLocation>
        <location evidence="4">Secreted</location>
    </subcellularLocation>
</comment>
<comment type="tissue specificity">
    <text evidence="4">Expressed by the venom gland.</text>
</comment>
<comment type="domain">
    <text evidence="1">The presence of a 'disulfide through disulfide knot' structurally defines this protein as a knottin.</text>
</comment>
<name>CVP3_PIMHY</name>
<keyword id="KW-0903">Direct protein sequencing</keyword>
<keyword id="KW-1015">Disulfide bond</keyword>
<keyword id="KW-0960">Knottin</keyword>
<keyword id="KW-0964">Secreted</keyword>
<keyword id="KW-0732">Signal</keyword>
<proteinExistence type="evidence at protein level"/>
<dbReference type="EMBL" id="AJ438994">
    <property type="protein sequence ID" value="CAD27739.1"/>
    <property type="molecule type" value="mRNA"/>
</dbReference>
<dbReference type="SMR" id="Q8T0W3"/>
<dbReference type="GO" id="GO:0005576">
    <property type="term" value="C:extracellular region"/>
    <property type="evidence" value="ECO:0007669"/>
    <property type="project" value="UniProtKB-SubCell"/>
</dbReference>
<dbReference type="GO" id="GO:0008200">
    <property type="term" value="F:ion channel inhibitor activity"/>
    <property type="evidence" value="ECO:0007669"/>
    <property type="project" value="InterPro"/>
</dbReference>
<dbReference type="InterPro" id="IPR011696">
    <property type="entry name" value="Huwentoxin-1"/>
</dbReference>
<dbReference type="Pfam" id="PF07740">
    <property type="entry name" value="Toxin_12"/>
    <property type="match status" value="1"/>
</dbReference>
<evidence type="ECO:0000250" key="1"/>
<evidence type="ECO:0000250" key="2">
    <source>
        <dbReference type="UniProtKB" id="P56207"/>
    </source>
</evidence>
<evidence type="ECO:0000255" key="3"/>
<evidence type="ECO:0000269" key="4">
    <source>
    </source>
</evidence>
<evidence type="ECO:0000305" key="5"/>
<evidence type="ECO:0000312" key="6">
    <source>
        <dbReference type="EMBL" id="CAD27739.1"/>
    </source>
</evidence>
<feature type="signal peptide" evidence="3 4">
    <location>
        <begin position="1"/>
        <end position="25"/>
    </location>
</feature>
<feature type="chain" id="PRO_0000021048" description="Cysteine-rich venom protein 3" evidence="3 4">
    <location>
        <begin position="26"/>
        <end position="63"/>
    </location>
</feature>
<feature type="disulfide bond" evidence="2">
    <location>
        <begin position="29"/>
        <end position="43"/>
    </location>
</feature>
<feature type="disulfide bond" evidence="2">
    <location>
        <begin position="36"/>
        <end position="48"/>
    </location>
</feature>
<feature type="disulfide bond" evidence="2">
    <location>
        <begin position="42"/>
        <end position="58"/>
    </location>
</feature>
<reference evidence="5 6" key="1">
    <citation type="journal article" date="2004" name="Insect Biochem. Mol. Biol.">
        <title>Towards a comprehensive view of the primary structure of venom proteins from the parasitoid wasp Pimpla hypochondriaca.</title>
        <authorList>
            <person name="Parkinson N.M."/>
            <person name="Conyers C."/>
            <person name="Keen J."/>
            <person name="MacNicoll A."/>
            <person name="Smith I."/>
            <person name="Audsley N."/>
            <person name="Weaver R."/>
        </authorList>
    </citation>
    <scope>NUCLEOTIDE SEQUENCE [MRNA]</scope>
    <scope>PROTEIN SEQUENCE OF 26-31</scope>
    <source>
        <tissue evidence="4">Venom</tissue>
        <tissue evidence="4">Venom gland</tissue>
    </source>
</reference>
<organism>
    <name type="scientific">Pimpla hypochondriaca</name>
    <name type="common">Parasitoid wasp</name>
    <dbReference type="NCBI Taxonomy" id="135724"/>
    <lineage>
        <taxon>Eukaryota</taxon>
        <taxon>Metazoa</taxon>
        <taxon>Ecdysozoa</taxon>
        <taxon>Arthropoda</taxon>
        <taxon>Hexapoda</taxon>
        <taxon>Insecta</taxon>
        <taxon>Pterygota</taxon>
        <taxon>Neoptera</taxon>
        <taxon>Endopterygota</taxon>
        <taxon>Hymenoptera</taxon>
        <taxon>Apocrita</taxon>
        <taxon>Ichneumonoidea</taxon>
        <taxon>Ichneumonidae</taxon>
        <taxon>Pimplinae</taxon>
        <taxon>Pimplini</taxon>
        <taxon>Pimpla</taxon>
    </lineage>
</organism>
<sequence>MRKPITLILVVALALVLLATSEVSAYRACGFPGRRCSPTEECCEGLVCQPRKNGPSMCYRPDP</sequence>
<protein>
    <recommendedName>
        <fullName>Cysteine-rich venom protein 3</fullName>
        <shortName>cvp3</shortName>
    </recommendedName>
</protein>
<accession>Q8T0W3</accession>